<accession>Q6GBU7</accession>
<keyword id="KW-0687">Ribonucleoprotein</keyword>
<keyword id="KW-0689">Ribosomal protein</keyword>
<evidence type="ECO:0000255" key="1">
    <source>
        <dbReference type="HAMAP-Rule" id="MF_00368"/>
    </source>
</evidence>
<evidence type="ECO:0000305" key="2"/>
<feature type="chain" id="PRO_0000157578" description="Large ribosomal subunit protein bL12">
    <location>
        <begin position="1"/>
        <end position="122"/>
    </location>
</feature>
<name>RL7_STAAS</name>
<protein>
    <recommendedName>
        <fullName evidence="1">Large ribosomal subunit protein bL12</fullName>
    </recommendedName>
    <alternativeName>
        <fullName evidence="2">50S ribosomal protein L7/L12</fullName>
    </alternativeName>
</protein>
<gene>
    <name evidence="1" type="primary">rplL</name>
    <name type="ordered locus">SAS0498</name>
</gene>
<comment type="function">
    <text evidence="1">Forms part of the ribosomal stalk which helps the ribosome interact with GTP-bound translation factors. Is thus essential for accurate translation.</text>
</comment>
<comment type="subunit">
    <text evidence="1">Homodimer. Part of the ribosomal stalk of the 50S ribosomal subunit. Forms a multimeric L10(L12)X complex, where L10 forms an elongated spine to which 2 to 4 L12 dimers bind in a sequential fashion. Binds GTP-bound translation factors.</text>
</comment>
<comment type="similarity">
    <text evidence="1">Belongs to the bacterial ribosomal protein bL12 family.</text>
</comment>
<sequence length="122" mass="12712">MANHEQIIEAIKEMSVLELNDLVKAIEEEFGVTAAAPVAVAGAAGGADAAAEKTEFDVELTSAGSSKIKVVKAVKEATGLGLKDAKELVDGAPKVIKEALPKEEAEKLKEQLEEVGATVELK</sequence>
<organism>
    <name type="scientific">Staphylococcus aureus (strain MSSA476)</name>
    <dbReference type="NCBI Taxonomy" id="282459"/>
    <lineage>
        <taxon>Bacteria</taxon>
        <taxon>Bacillati</taxon>
        <taxon>Bacillota</taxon>
        <taxon>Bacilli</taxon>
        <taxon>Bacillales</taxon>
        <taxon>Staphylococcaceae</taxon>
        <taxon>Staphylococcus</taxon>
    </lineage>
</organism>
<proteinExistence type="inferred from homology"/>
<reference key="1">
    <citation type="journal article" date="2004" name="Proc. Natl. Acad. Sci. U.S.A.">
        <title>Complete genomes of two clinical Staphylococcus aureus strains: evidence for the rapid evolution of virulence and drug resistance.</title>
        <authorList>
            <person name="Holden M.T.G."/>
            <person name="Feil E.J."/>
            <person name="Lindsay J.A."/>
            <person name="Peacock S.J."/>
            <person name="Day N.P.J."/>
            <person name="Enright M.C."/>
            <person name="Foster T.J."/>
            <person name="Moore C.E."/>
            <person name="Hurst L."/>
            <person name="Atkin R."/>
            <person name="Barron A."/>
            <person name="Bason N."/>
            <person name="Bentley S.D."/>
            <person name="Chillingworth C."/>
            <person name="Chillingworth T."/>
            <person name="Churcher C."/>
            <person name="Clark L."/>
            <person name="Corton C."/>
            <person name="Cronin A."/>
            <person name="Doggett J."/>
            <person name="Dowd L."/>
            <person name="Feltwell T."/>
            <person name="Hance Z."/>
            <person name="Harris B."/>
            <person name="Hauser H."/>
            <person name="Holroyd S."/>
            <person name="Jagels K."/>
            <person name="James K.D."/>
            <person name="Lennard N."/>
            <person name="Line A."/>
            <person name="Mayes R."/>
            <person name="Moule S."/>
            <person name="Mungall K."/>
            <person name="Ormond D."/>
            <person name="Quail M.A."/>
            <person name="Rabbinowitsch E."/>
            <person name="Rutherford K.M."/>
            <person name="Sanders M."/>
            <person name="Sharp S."/>
            <person name="Simmonds M."/>
            <person name="Stevens K."/>
            <person name="Whitehead S."/>
            <person name="Barrell B.G."/>
            <person name="Spratt B.G."/>
            <person name="Parkhill J."/>
        </authorList>
    </citation>
    <scope>NUCLEOTIDE SEQUENCE [LARGE SCALE GENOMIC DNA]</scope>
    <source>
        <strain>MSSA476</strain>
    </source>
</reference>
<dbReference type="EMBL" id="BX571857">
    <property type="protein sequence ID" value="CAG42273.1"/>
    <property type="molecule type" value="Genomic_DNA"/>
</dbReference>
<dbReference type="RefSeq" id="WP_001273586.1">
    <property type="nucleotide sequence ID" value="NC_002953.3"/>
</dbReference>
<dbReference type="SMR" id="Q6GBU7"/>
<dbReference type="GeneID" id="98344874"/>
<dbReference type="KEGG" id="sas:SAS0498"/>
<dbReference type="HOGENOM" id="CLU_086499_3_2_9"/>
<dbReference type="GO" id="GO:0022625">
    <property type="term" value="C:cytosolic large ribosomal subunit"/>
    <property type="evidence" value="ECO:0007669"/>
    <property type="project" value="TreeGrafter"/>
</dbReference>
<dbReference type="GO" id="GO:0003729">
    <property type="term" value="F:mRNA binding"/>
    <property type="evidence" value="ECO:0007669"/>
    <property type="project" value="TreeGrafter"/>
</dbReference>
<dbReference type="GO" id="GO:0003735">
    <property type="term" value="F:structural constituent of ribosome"/>
    <property type="evidence" value="ECO:0007669"/>
    <property type="project" value="InterPro"/>
</dbReference>
<dbReference type="GO" id="GO:0006412">
    <property type="term" value="P:translation"/>
    <property type="evidence" value="ECO:0007669"/>
    <property type="project" value="UniProtKB-UniRule"/>
</dbReference>
<dbReference type="CDD" id="cd00387">
    <property type="entry name" value="Ribosomal_L7_L12"/>
    <property type="match status" value="1"/>
</dbReference>
<dbReference type="FunFam" id="1.20.5.710:FF:000002">
    <property type="entry name" value="50S ribosomal protein L7/L12"/>
    <property type="match status" value="1"/>
</dbReference>
<dbReference type="FunFam" id="3.30.1390.10:FF:000001">
    <property type="entry name" value="50S ribosomal protein L7/L12"/>
    <property type="match status" value="1"/>
</dbReference>
<dbReference type="Gene3D" id="3.30.1390.10">
    <property type="match status" value="1"/>
</dbReference>
<dbReference type="Gene3D" id="1.20.5.710">
    <property type="entry name" value="Single helix bin"/>
    <property type="match status" value="1"/>
</dbReference>
<dbReference type="HAMAP" id="MF_00368">
    <property type="entry name" value="Ribosomal_bL12"/>
    <property type="match status" value="1"/>
</dbReference>
<dbReference type="InterPro" id="IPR000206">
    <property type="entry name" value="Ribosomal_bL12"/>
</dbReference>
<dbReference type="InterPro" id="IPR013823">
    <property type="entry name" value="Ribosomal_bL12_C"/>
</dbReference>
<dbReference type="InterPro" id="IPR014719">
    <property type="entry name" value="Ribosomal_bL12_C/ClpS-like"/>
</dbReference>
<dbReference type="InterPro" id="IPR008932">
    <property type="entry name" value="Ribosomal_bL12_oligo"/>
</dbReference>
<dbReference type="InterPro" id="IPR036235">
    <property type="entry name" value="Ribosomal_bL12_oligo_N_sf"/>
</dbReference>
<dbReference type="NCBIfam" id="TIGR00855">
    <property type="entry name" value="L12"/>
    <property type="match status" value="1"/>
</dbReference>
<dbReference type="PANTHER" id="PTHR45987">
    <property type="entry name" value="39S RIBOSOMAL PROTEIN L12"/>
    <property type="match status" value="1"/>
</dbReference>
<dbReference type="PANTHER" id="PTHR45987:SF4">
    <property type="entry name" value="LARGE RIBOSOMAL SUBUNIT PROTEIN BL12M"/>
    <property type="match status" value="1"/>
</dbReference>
<dbReference type="Pfam" id="PF00542">
    <property type="entry name" value="Ribosomal_L12"/>
    <property type="match status" value="1"/>
</dbReference>
<dbReference type="Pfam" id="PF16320">
    <property type="entry name" value="Ribosomal_L12_N"/>
    <property type="match status" value="1"/>
</dbReference>
<dbReference type="SUPFAM" id="SSF54736">
    <property type="entry name" value="ClpS-like"/>
    <property type="match status" value="1"/>
</dbReference>
<dbReference type="SUPFAM" id="SSF48300">
    <property type="entry name" value="Ribosomal protein L7/12, oligomerisation (N-terminal) domain"/>
    <property type="match status" value="1"/>
</dbReference>